<name>MNME_BURL3</name>
<accession>Q39BQ4</accession>
<protein>
    <recommendedName>
        <fullName evidence="1">tRNA modification GTPase MnmE</fullName>
        <ecNumber evidence="1">3.6.-.-</ecNumber>
    </recommendedName>
</protein>
<reference key="1">
    <citation type="submission" date="2005-10" db="EMBL/GenBank/DDBJ databases">
        <title>Complete sequence of chromosome 1 of Burkholderia sp. 383.</title>
        <authorList>
            <consortium name="US DOE Joint Genome Institute"/>
            <person name="Copeland A."/>
            <person name="Lucas S."/>
            <person name="Lapidus A."/>
            <person name="Barry K."/>
            <person name="Detter J.C."/>
            <person name="Glavina T."/>
            <person name="Hammon N."/>
            <person name="Israni S."/>
            <person name="Pitluck S."/>
            <person name="Chain P."/>
            <person name="Malfatti S."/>
            <person name="Shin M."/>
            <person name="Vergez L."/>
            <person name="Schmutz J."/>
            <person name="Larimer F."/>
            <person name="Land M."/>
            <person name="Kyrpides N."/>
            <person name="Lykidis A."/>
            <person name="Richardson P."/>
        </authorList>
    </citation>
    <scope>NUCLEOTIDE SEQUENCE [LARGE SCALE GENOMIC DNA]</scope>
    <source>
        <strain>ATCC 17760 / DSM 23089 / LMG 22485 / NCIMB 9086 / R18194 / 383</strain>
    </source>
</reference>
<dbReference type="EC" id="3.6.-.-" evidence="1"/>
<dbReference type="EMBL" id="CP000151">
    <property type="protein sequence ID" value="ABB10112.1"/>
    <property type="status" value="ALT_INIT"/>
    <property type="molecule type" value="Genomic_DNA"/>
</dbReference>
<dbReference type="RefSeq" id="WP_011353613.1">
    <property type="nucleotide sequence ID" value="NC_007510.1"/>
</dbReference>
<dbReference type="SMR" id="Q39BQ4"/>
<dbReference type="GeneID" id="45096387"/>
<dbReference type="KEGG" id="bur:Bcep18194_A6518"/>
<dbReference type="PATRIC" id="fig|482957.22.peg.3552"/>
<dbReference type="HOGENOM" id="CLU_019624_4_1_4"/>
<dbReference type="Proteomes" id="UP000002705">
    <property type="component" value="Chromosome 1"/>
</dbReference>
<dbReference type="GO" id="GO:0005829">
    <property type="term" value="C:cytosol"/>
    <property type="evidence" value="ECO:0007669"/>
    <property type="project" value="TreeGrafter"/>
</dbReference>
<dbReference type="GO" id="GO:0005525">
    <property type="term" value="F:GTP binding"/>
    <property type="evidence" value="ECO:0007669"/>
    <property type="project" value="UniProtKB-UniRule"/>
</dbReference>
<dbReference type="GO" id="GO:0003924">
    <property type="term" value="F:GTPase activity"/>
    <property type="evidence" value="ECO:0007669"/>
    <property type="project" value="UniProtKB-UniRule"/>
</dbReference>
<dbReference type="GO" id="GO:0046872">
    <property type="term" value="F:metal ion binding"/>
    <property type="evidence" value="ECO:0007669"/>
    <property type="project" value="UniProtKB-KW"/>
</dbReference>
<dbReference type="GO" id="GO:0030488">
    <property type="term" value="P:tRNA methylation"/>
    <property type="evidence" value="ECO:0007669"/>
    <property type="project" value="TreeGrafter"/>
</dbReference>
<dbReference type="GO" id="GO:0002098">
    <property type="term" value="P:tRNA wobble uridine modification"/>
    <property type="evidence" value="ECO:0007669"/>
    <property type="project" value="TreeGrafter"/>
</dbReference>
<dbReference type="CDD" id="cd04164">
    <property type="entry name" value="trmE"/>
    <property type="match status" value="1"/>
</dbReference>
<dbReference type="CDD" id="cd14858">
    <property type="entry name" value="TrmE_N"/>
    <property type="match status" value="1"/>
</dbReference>
<dbReference type="Gene3D" id="3.40.50.300">
    <property type="entry name" value="P-loop containing nucleotide triphosphate hydrolases"/>
    <property type="match status" value="1"/>
</dbReference>
<dbReference type="Gene3D" id="3.30.1360.120">
    <property type="entry name" value="Probable tRNA modification gtpase trme, domain 1"/>
    <property type="match status" value="1"/>
</dbReference>
<dbReference type="Gene3D" id="1.20.120.430">
    <property type="entry name" value="tRNA modification GTPase MnmE domain 2"/>
    <property type="match status" value="1"/>
</dbReference>
<dbReference type="HAMAP" id="MF_00379">
    <property type="entry name" value="GTPase_MnmE"/>
    <property type="match status" value="1"/>
</dbReference>
<dbReference type="InterPro" id="IPR031168">
    <property type="entry name" value="G_TrmE"/>
</dbReference>
<dbReference type="InterPro" id="IPR006073">
    <property type="entry name" value="GTP-bd"/>
</dbReference>
<dbReference type="InterPro" id="IPR018948">
    <property type="entry name" value="GTP-bd_TrmE_N"/>
</dbReference>
<dbReference type="InterPro" id="IPR004520">
    <property type="entry name" value="GTPase_MnmE"/>
</dbReference>
<dbReference type="InterPro" id="IPR027368">
    <property type="entry name" value="MnmE_dom2"/>
</dbReference>
<dbReference type="InterPro" id="IPR025867">
    <property type="entry name" value="MnmE_helical"/>
</dbReference>
<dbReference type="InterPro" id="IPR027417">
    <property type="entry name" value="P-loop_NTPase"/>
</dbReference>
<dbReference type="InterPro" id="IPR005225">
    <property type="entry name" value="Small_GTP-bd"/>
</dbReference>
<dbReference type="InterPro" id="IPR027266">
    <property type="entry name" value="TrmE/GcvT_dom1"/>
</dbReference>
<dbReference type="NCBIfam" id="TIGR00450">
    <property type="entry name" value="mnmE_trmE_thdF"/>
    <property type="match status" value="1"/>
</dbReference>
<dbReference type="NCBIfam" id="NF003661">
    <property type="entry name" value="PRK05291.1-3"/>
    <property type="match status" value="1"/>
</dbReference>
<dbReference type="NCBIfam" id="TIGR00231">
    <property type="entry name" value="small_GTP"/>
    <property type="match status" value="1"/>
</dbReference>
<dbReference type="PANTHER" id="PTHR42714">
    <property type="entry name" value="TRNA MODIFICATION GTPASE GTPBP3"/>
    <property type="match status" value="1"/>
</dbReference>
<dbReference type="PANTHER" id="PTHR42714:SF2">
    <property type="entry name" value="TRNA MODIFICATION GTPASE GTPBP3, MITOCHONDRIAL"/>
    <property type="match status" value="1"/>
</dbReference>
<dbReference type="Pfam" id="PF01926">
    <property type="entry name" value="MMR_HSR1"/>
    <property type="match status" value="1"/>
</dbReference>
<dbReference type="Pfam" id="PF12631">
    <property type="entry name" value="MnmE_helical"/>
    <property type="match status" value="1"/>
</dbReference>
<dbReference type="Pfam" id="PF10396">
    <property type="entry name" value="TrmE_N"/>
    <property type="match status" value="1"/>
</dbReference>
<dbReference type="PRINTS" id="PR00326">
    <property type="entry name" value="GTP1OBG"/>
</dbReference>
<dbReference type="SUPFAM" id="SSF52540">
    <property type="entry name" value="P-loop containing nucleoside triphosphate hydrolases"/>
    <property type="match status" value="1"/>
</dbReference>
<dbReference type="SUPFAM" id="SSF116878">
    <property type="entry name" value="TrmE connector domain"/>
    <property type="match status" value="1"/>
</dbReference>
<dbReference type="PROSITE" id="PS51709">
    <property type="entry name" value="G_TRME"/>
    <property type="match status" value="1"/>
</dbReference>
<organism>
    <name type="scientific">Burkholderia lata (strain ATCC 17760 / DSM 23089 / LMG 22485 / NCIMB 9086 / R18194 / 383)</name>
    <dbReference type="NCBI Taxonomy" id="482957"/>
    <lineage>
        <taxon>Bacteria</taxon>
        <taxon>Pseudomonadati</taxon>
        <taxon>Pseudomonadota</taxon>
        <taxon>Betaproteobacteria</taxon>
        <taxon>Burkholderiales</taxon>
        <taxon>Burkholderiaceae</taxon>
        <taxon>Burkholderia</taxon>
        <taxon>Burkholderia cepacia complex</taxon>
    </lineage>
</organism>
<evidence type="ECO:0000255" key="1">
    <source>
        <dbReference type="HAMAP-Rule" id="MF_00379"/>
    </source>
</evidence>
<evidence type="ECO:0000305" key="2"/>
<sequence>MLATDSDPIVAIATAAGRGGIGVVRVSFGRGGEAAALPLIDALCGQKLAPRHASYVPFLDEHGAPLDRGIALYFPAPHSYTGEHVLELQGHGGPIVMQLLLQRCLDAGRGFGLRLAEPGEFTRRAFLNDKLDLAQAEAVADLIEASTEAAARSAGRSLDGAFSRQIHALVDDVITLRMLVEATLDFPEEEIDFLEAADARGKLAKIRAQLAHVLGDARQGALLREGLSVVLAGQPNVGKSSLLNALAGAELAIVTPIAGTTRDKVAQTIQVEGIPLHIIDTAGLRETEDEVERIGIARTWSEIERADVVLHLLDSRNGMTADDETIAARFPGGVPVVRVLNKTDLTGVAACVEHPAAEGDLTEVHLSAKRGDGIDMLRAELLRIAGWQAGAEGVYLARERHLIALRAAQEHLAQAADHAEQRAQSLDLFAEELRLAQEQLNAITGEFTSDDLLGVIFSRFCIGK</sequence>
<comment type="function">
    <text evidence="1">Exhibits a very high intrinsic GTPase hydrolysis rate. Involved in the addition of a carboxymethylaminomethyl (cmnm) group at the wobble position (U34) of certain tRNAs, forming tRNA-cmnm(5)s(2)U34.</text>
</comment>
<comment type="cofactor">
    <cofactor evidence="1">
        <name>K(+)</name>
        <dbReference type="ChEBI" id="CHEBI:29103"/>
    </cofactor>
    <text evidence="1">Binds 1 potassium ion per subunit.</text>
</comment>
<comment type="subunit">
    <text evidence="1">Homodimer. Heterotetramer of two MnmE and two MnmG subunits.</text>
</comment>
<comment type="subcellular location">
    <subcellularLocation>
        <location evidence="1">Cytoplasm</location>
    </subcellularLocation>
</comment>
<comment type="similarity">
    <text evidence="1">Belongs to the TRAFAC class TrmE-Era-EngA-EngB-Septin-like GTPase superfamily. TrmE GTPase family.</text>
</comment>
<comment type="sequence caution" evidence="2">
    <conflict type="erroneous initiation">
        <sequence resource="EMBL-CDS" id="ABB10112"/>
    </conflict>
</comment>
<gene>
    <name evidence="1" type="primary">mnmE</name>
    <name evidence="1" type="synonym">trmE</name>
    <name type="ordered locus">Bcep18194_A6518</name>
</gene>
<keyword id="KW-0963">Cytoplasm</keyword>
<keyword id="KW-0342">GTP-binding</keyword>
<keyword id="KW-0378">Hydrolase</keyword>
<keyword id="KW-0460">Magnesium</keyword>
<keyword id="KW-0479">Metal-binding</keyword>
<keyword id="KW-0547">Nucleotide-binding</keyword>
<keyword id="KW-0630">Potassium</keyword>
<keyword id="KW-0819">tRNA processing</keyword>
<feature type="chain" id="PRO_0000345748" description="tRNA modification GTPase MnmE">
    <location>
        <begin position="1"/>
        <end position="464"/>
    </location>
</feature>
<feature type="domain" description="TrmE-type G">
    <location>
        <begin position="226"/>
        <end position="386"/>
    </location>
</feature>
<feature type="binding site" evidence="1">
    <location>
        <position position="25"/>
    </location>
    <ligand>
        <name>(6S)-5-formyl-5,6,7,8-tetrahydrofolate</name>
        <dbReference type="ChEBI" id="CHEBI:57457"/>
    </ligand>
</feature>
<feature type="binding site" evidence="1">
    <location>
        <position position="87"/>
    </location>
    <ligand>
        <name>(6S)-5-formyl-5,6,7,8-tetrahydrofolate</name>
        <dbReference type="ChEBI" id="CHEBI:57457"/>
    </ligand>
</feature>
<feature type="binding site" evidence="1">
    <location>
        <position position="130"/>
    </location>
    <ligand>
        <name>(6S)-5-formyl-5,6,7,8-tetrahydrofolate</name>
        <dbReference type="ChEBI" id="CHEBI:57457"/>
    </ligand>
</feature>
<feature type="binding site" evidence="1">
    <location>
        <begin position="236"/>
        <end position="241"/>
    </location>
    <ligand>
        <name>GTP</name>
        <dbReference type="ChEBI" id="CHEBI:37565"/>
    </ligand>
</feature>
<feature type="binding site" evidence="1">
    <location>
        <position position="236"/>
    </location>
    <ligand>
        <name>K(+)</name>
        <dbReference type="ChEBI" id="CHEBI:29103"/>
    </ligand>
</feature>
<feature type="binding site" evidence="1">
    <location>
        <position position="240"/>
    </location>
    <ligand>
        <name>Mg(2+)</name>
        <dbReference type="ChEBI" id="CHEBI:18420"/>
    </ligand>
</feature>
<feature type="binding site" evidence="1">
    <location>
        <begin position="255"/>
        <end position="261"/>
    </location>
    <ligand>
        <name>GTP</name>
        <dbReference type="ChEBI" id="CHEBI:37565"/>
    </ligand>
</feature>
<feature type="binding site" evidence="1">
    <location>
        <position position="255"/>
    </location>
    <ligand>
        <name>K(+)</name>
        <dbReference type="ChEBI" id="CHEBI:29103"/>
    </ligand>
</feature>
<feature type="binding site" evidence="1">
    <location>
        <position position="257"/>
    </location>
    <ligand>
        <name>K(+)</name>
        <dbReference type="ChEBI" id="CHEBI:29103"/>
    </ligand>
</feature>
<feature type="binding site" evidence="1">
    <location>
        <position position="260"/>
    </location>
    <ligand>
        <name>K(+)</name>
        <dbReference type="ChEBI" id="CHEBI:29103"/>
    </ligand>
</feature>
<feature type="binding site" evidence="1">
    <location>
        <position position="261"/>
    </location>
    <ligand>
        <name>Mg(2+)</name>
        <dbReference type="ChEBI" id="CHEBI:18420"/>
    </ligand>
</feature>
<feature type="binding site" evidence="1">
    <location>
        <begin position="280"/>
        <end position="283"/>
    </location>
    <ligand>
        <name>GTP</name>
        <dbReference type="ChEBI" id="CHEBI:37565"/>
    </ligand>
</feature>
<feature type="binding site" evidence="1">
    <location>
        <position position="464"/>
    </location>
    <ligand>
        <name>(6S)-5-formyl-5,6,7,8-tetrahydrofolate</name>
        <dbReference type="ChEBI" id="CHEBI:57457"/>
    </ligand>
</feature>
<proteinExistence type="inferred from homology"/>